<comment type="function">
    <text>Involved in early stages of root nodule development.</text>
</comment>
<comment type="induction">
    <text>During nodulation in legume roots after Rhizobium infection.</text>
</comment>
<comment type="similarity">
    <text evidence="2">Belongs to the nodulin 75 family.</text>
</comment>
<keyword id="KW-0536">Nodulation</keyword>
<keyword id="KW-1185">Reference proteome</keyword>
<keyword id="KW-0677">Repeat</keyword>
<keyword id="KW-0732">Signal</keyword>
<name>NO75_SOYBN</name>
<reference key="1">
    <citation type="journal article" date="1990" name="Plant Mol. Biol.">
        <title>Nucleotide sequence of two soybean ENOD2 early nodulin genes encoding Ngm-75.</title>
        <authorList>
            <person name="Franssen H.J."/>
            <person name="Thompson D.V."/>
            <person name="Idler K."/>
            <person name="Kormelink R."/>
            <person name="van Kammen A."/>
            <person name="Bisseling T."/>
        </authorList>
    </citation>
    <scope>NUCLEOTIDE SEQUENCE</scope>
    <source>
        <strain>cv. Wayne</strain>
    </source>
</reference>
<reference key="2">
    <citation type="journal article" date="1987" name="Proc. Natl. Acad. Sci. U.S.A.">
        <title>Characterization of cDNA for nodulin-75 of soybean: a gene product involved in early stages of root nodule development.</title>
        <authorList>
            <person name="Franssen H.J."/>
            <person name="Nap J.-P."/>
            <person name="Gloudemans T."/>
            <person name="Stiekema W."/>
            <person name="van Dam H."/>
            <person name="Govers F."/>
            <person name="Louwerse J."/>
            <person name="van Kammen A."/>
            <person name="Bisseling T."/>
        </authorList>
    </citation>
    <scope>NUCLEOTIDE SEQUENCE OF 69-309</scope>
</reference>
<dbReference type="EMBL" id="M16976">
    <property type="protein sequence ID" value="AAA33996.1"/>
    <property type="molecule type" value="mRNA"/>
</dbReference>
<dbReference type="EMBL" id="X16875">
    <property type="protein sequence ID" value="CAA34758.1"/>
    <property type="molecule type" value="Genomic_DNA"/>
</dbReference>
<dbReference type="EMBL" id="X16876">
    <property type="protein sequence ID" value="CAA34759.1"/>
    <property type="molecule type" value="Genomic_DNA"/>
</dbReference>
<dbReference type="PIR" id="S08343">
    <property type="entry name" value="S08343"/>
</dbReference>
<dbReference type="SMR" id="P08297"/>
<dbReference type="STRING" id="3847.P08297"/>
<dbReference type="InParanoid" id="P08297"/>
<dbReference type="Proteomes" id="UP000008827">
    <property type="component" value="Unplaced"/>
</dbReference>
<dbReference type="GO" id="GO:0009877">
    <property type="term" value="P:nodulation"/>
    <property type="evidence" value="ECO:0007669"/>
    <property type="project" value="UniProtKB-KW"/>
</dbReference>
<dbReference type="InterPro" id="IPR051308">
    <property type="entry name" value="Proline-rich_CW_protein"/>
</dbReference>
<dbReference type="PANTHER" id="PTHR34629">
    <property type="entry name" value="PROLINE-RICH EXTENSIN-LIKE PROTEIN EPR1"/>
    <property type="match status" value="1"/>
</dbReference>
<dbReference type="PANTHER" id="PTHR34629:SF1">
    <property type="entry name" value="PROLINE-RICH EXTENSIN-LIKE PROTEIN EPR1"/>
    <property type="match status" value="1"/>
</dbReference>
<dbReference type="PRINTS" id="PR01217">
    <property type="entry name" value="PRICHEXTENSN"/>
</dbReference>
<proteinExistence type="evidence at transcript level"/>
<protein>
    <recommendedName>
        <fullName>Early nodulin-75</fullName>
        <shortName>N-75</shortName>
    </recommendedName>
    <alternativeName>
        <fullName>NGm-75</fullName>
    </alternativeName>
</protein>
<sequence length="309" mass="35966">MTSVLHYSLLLLLLGVVILTTPVLANLKPRFFYEPPPIEKPPTYEPPPFYKPPYYPPPVHHPPPEYQPPHEKTPPEYLPPPHEKPPPEYLPPHEKPPPEYQPPHEKPPHENPPPEHQPPHEKPPEHQPPHEKPPPEYEPPHEKPPPEYQPPHEKPPPEYQPPHEKPPPEYQPPHEKPPPEHQPPHEKPPEHQPPHEKPPPEYQPPHEKPPPEYQPPQEKPPHEKPPPEYQPPHEKPPPEHQPPHEKPPPVYPPPYEKPPPVYEPPYEKPPPVVYPPPHEKPPIYEPPPLEKPPVYNPPPYGRYPPSKKN</sequence>
<accession>P08297</accession>
<evidence type="ECO:0000256" key="1">
    <source>
        <dbReference type="SAM" id="MobiDB-lite"/>
    </source>
</evidence>
<evidence type="ECO:0000305" key="2"/>
<organism>
    <name type="scientific">Glycine max</name>
    <name type="common">Soybean</name>
    <name type="synonym">Glycine hispida</name>
    <dbReference type="NCBI Taxonomy" id="3847"/>
    <lineage>
        <taxon>Eukaryota</taxon>
        <taxon>Viridiplantae</taxon>
        <taxon>Streptophyta</taxon>
        <taxon>Embryophyta</taxon>
        <taxon>Tracheophyta</taxon>
        <taxon>Spermatophyta</taxon>
        <taxon>Magnoliopsida</taxon>
        <taxon>eudicotyledons</taxon>
        <taxon>Gunneridae</taxon>
        <taxon>Pentapetalae</taxon>
        <taxon>rosids</taxon>
        <taxon>fabids</taxon>
        <taxon>Fabales</taxon>
        <taxon>Fabaceae</taxon>
        <taxon>Papilionoideae</taxon>
        <taxon>50 kb inversion clade</taxon>
        <taxon>NPAAA clade</taxon>
        <taxon>indigoferoid/millettioid clade</taxon>
        <taxon>Phaseoleae</taxon>
        <taxon>Glycine</taxon>
        <taxon>Glycine subgen. Soja</taxon>
    </lineage>
</organism>
<feature type="signal peptide">
    <location>
        <begin position="1"/>
        <end position="25"/>
    </location>
</feature>
<feature type="chain" id="PRO_0000019799" description="Early nodulin-75">
    <location>
        <begin position="26"/>
        <end position="309"/>
    </location>
</feature>
<feature type="region of interest" description="Disordered" evidence="1">
    <location>
        <begin position="56"/>
        <end position="309"/>
    </location>
</feature>
<feature type="compositionally biased region" description="Pro residues" evidence="1">
    <location>
        <begin position="56"/>
        <end position="67"/>
    </location>
</feature>
<feature type="compositionally biased region" description="Basic and acidic residues" evidence="1">
    <location>
        <begin position="81"/>
        <end position="210"/>
    </location>
</feature>
<feature type="compositionally biased region" description="Basic and acidic residues" evidence="1">
    <location>
        <begin position="219"/>
        <end position="247"/>
    </location>
</feature>
<feature type="compositionally biased region" description="Pro residues" evidence="1">
    <location>
        <begin position="248"/>
        <end position="276"/>
    </location>
</feature>
<feature type="compositionally biased region" description="Pro residues" evidence="1">
    <location>
        <begin position="283"/>
        <end position="302"/>
    </location>
</feature>
<feature type="sequence conflict" description="In Ref. 2; AAA33996." evidence="2" ref="2">
    <original>Y</original>
    <variation>C</variation>
    <location>
        <position position="262"/>
    </location>
</feature>
<gene>
    <name type="primary">ENOD2A</name>
</gene>
<gene>
    <name type="primary">ENOD2B</name>
</gene>